<protein>
    <recommendedName>
        <fullName evidence="2">GTP cyclohydrolase 1</fullName>
        <ecNumber evidence="2">3.5.4.16</ecNumber>
    </recommendedName>
    <alternativeName>
        <fullName evidence="2">GTP cyclohydrolase I</fullName>
        <shortName evidence="2">GTP-CH-I</shortName>
    </alternativeName>
</protein>
<organism>
    <name type="scientific">Listeria welshimeri serovar 6b (strain ATCC 35897 / DSM 20650 / CCUG 15529 / CIP 8149 / NCTC 11857 / SLCC 5334 / V8)</name>
    <dbReference type="NCBI Taxonomy" id="386043"/>
    <lineage>
        <taxon>Bacteria</taxon>
        <taxon>Bacillati</taxon>
        <taxon>Bacillota</taxon>
        <taxon>Bacilli</taxon>
        <taxon>Bacillales</taxon>
        <taxon>Listeriaceae</taxon>
        <taxon>Listeria</taxon>
    </lineage>
</organism>
<sequence length="189" mass="21265">MEQIDKQKIADAVKVILEAVGENPEREGLIDTPMRVARMYEEVFSGLKKDPSIHFDTIFAEQHEELVLVKDIRFSSMCEHHLVPFFGVAHVAYLPQNGRVAGLSKLARVVDDVSKRPQLQERITTTVAEIMMDKLKPLGVMVIMEAEHMCMTIRGVNKPGTKTITSAVRGAFKNDDKLRSEVLALIKHN</sequence>
<dbReference type="EC" id="3.5.4.16" evidence="2"/>
<dbReference type="EMBL" id="AM263198">
    <property type="protein sequence ID" value="CAK21377.1"/>
    <property type="molecule type" value="Genomic_DNA"/>
</dbReference>
<dbReference type="RefSeq" id="WP_011702725.1">
    <property type="nucleotide sequence ID" value="NC_008555.1"/>
</dbReference>
<dbReference type="SMR" id="A0AK45"/>
<dbReference type="STRING" id="386043.lwe1959"/>
<dbReference type="GeneID" id="61189859"/>
<dbReference type="KEGG" id="lwe:lwe1959"/>
<dbReference type="eggNOG" id="COG0302">
    <property type="taxonomic scope" value="Bacteria"/>
</dbReference>
<dbReference type="HOGENOM" id="CLU_049768_3_3_9"/>
<dbReference type="OrthoDB" id="9801207at2"/>
<dbReference type="UniPathway" id="UPA00848">
    <property type="reaction ID" value="UER00151"/>
</dbReference>
<dbReference type="Proteomes" id="UP000000779">
    <property type="component" value="Chromosome"/>
</dbReference>
<dbReference type="GO" id="GO:0005737">
    <property type="term" value="C:cytoplasm"/>
    <property type="evidence" value="ECO:0007669"/>
    <property type="project" value="TreeGrafter"/>
</dbReference>
<dbReference type="GO" id="GO:0005525">
    <property type="term" value="F:GTP binding"/>
    <property type="evidence" value="ECO:0007669"/>
    <property type="project" value="UniProtKB-KW"/>
</dbReference>
<dbReference type="GO" id="GO:0003934">
    <property type="term" value="F:GTP cyclohydrolase I activity"/>
    <property type="evidence" value="ECO:0007669"/>
    <property type="project" value="UniProtKB-UniRule"/>
</dbReference>
<dbReference type="GO" id="GO:0008270">
    <property type="term" value="F:zinc ion binding"/>
    <property type="evidence" value="ECO:0007669"/>
    <property type="project" value="UniProtKB-UniRule"/>
</dbReference>
<dbReference type="GO" id="GO:0006730">
    <property type="term" value="P:one-carbon metabolic process"/>
    <property type="evidence" value="ECO:0007669"/>
    <property type="project" value="UniProtKB-UniRule"/>
</dbReference>
<dbReference type="GO" id="GO:0006729">
    <property type="term" value="P:tetrahydrobiopterin biosynthetic process"/>
    <property type="evidence" value="ECO:0007669"/>
    <property type="project" value="TreeGrafter"/>
</dbReference>
<dbReference type="GO" id="GO:0046654">
    <property type="term" value="P:tetrahydrofolate biosynthetic process"/>
    <property type="evidence" value="ECO:0007669"/>
    <property type="project" value="UniProtKB-UniRule"/>
</dbReference>
<dbReference type="FunFam" id="1.10.286.10:FF:000001">
    <property type="entry name" value="GTP cyclohydrolase 1"/>
    <property type="match status" value="1"/>
</dbReference>
<dbReference type="FunFam" id="3.30.1130.10:FF:000001">
    <property type="entry name" value="GTP cyclohydrolase 1"/>
    <property type="match status" value="1"/>
</dbReference>
<dbReference type="Gene3D" id="1.10.286.10">
    <property type="match status" value="1"/>
</dbReference>
<dbReference type="Gene3D" id="3.30.1130.10">
    <property type="match status" value="1"/>
</dbReference>
<dbReference type="HAMAP" id="MF_00223">
    <property type="entry name" value="FolE"/>
    <property type="match status" value="1"/>
</dbReference>
<dbReference type="InterPro" id="IPR043133">
    <property type="entry name" value="GTP-CH-I_C/QueF"/>
</dbReference>
<dbReference type="InterPro" id="IPR043134">
    <property type="entry name" value="GTP-CH-I_N"/>
</dbReference>
<dbReference type="InterPro" id="IPR001474">
    <property type="entry name" value="GTP_CycHdrlase_I"/>
</dbReference>
<dbReference type="InterPro" id="IPR018234">
    <property type="entry name" value="GTP_CycHdrlase_I_CS"/>
</dbReference>
<dbReference type="InterPro" id="IPR020602">
    <property type="entry name" value="GTP_CycHdrlase_I_dom"/>
</dbReference>
<dbReference type="NCBIfam" id="TIGR00063">
    <property type="entry name" value="folE"/>
    <property type="match status" value="1"/>
</dbReference>
<dbReference type="NCBIfam" id="NF006825">
    <property type="entry name" value="PRK09347.1-2"/>
    <property type="match status" value="1"/>
</dbReference>
<dbReference type="NCBIfam" id="NF006826">
    <property type="entry name" value="PRK09347.1-3"/>
    <property type="match status" value="1"/>
</dbReference>
<dbReference type="PANTHER" id="PTHR11109:SF7">
    <property type="entry name" value="GTP CYCLOHYDROLASE 1"/>
    <property type="match status" value="1"/>
</dbReference>
<dbReference type="PANTHER" id="PTHR11109">
    <property type="entry name" value="GTP CYCLOHYDROLASE I"/>
    <property type="match status" value="1"/>
</dbReference>
<dbReference type="Pfam" id="PF01227">
    <property type="entry name" value="GTP_cyclohydroI"/>
    <property type="match status" value="1"/>
</dbReference>
<dbReference type="SUPFAM" id="SSF55620">
    <property type="entry name" value="Tetrahydrobiopterin biosynthesis enzymes-like"/>
    <property type="match status" value="1"/>
</dbReference>
<dbReference type="PROSITE" id="PS00859">
    <property type="entry name" value="GTP_CYCLOHYDROL_1_1"/>
    <property type="match status" value="1"/>
</dbReference>
<dbReference type="PROSITE" id="PS00860">
    <property type="entry name" value="GTP_CYCLOHYDROL_1_2"/>
    <property type="match status" value="1"/>
</dbReference>
<comment type="catalytic activity">
    <reaction evidence="2">
        <text>GTP + H2O = 7,8-dihydroneopterin 3'-triphosphate + formate + H(+)</text>
        <dbReference type="Rhea" id="RHEA:17473"/>
        <dbReference type="ChEBI" id="CHEBI:15377"/>
        <dbReference type="ChEBI" id="CHEBI:15378"/>
        <dbReference type="ChEBI" id="CHEBI:15740"/>
        <dbReference type="ChEBI" id="CHEBI:37565"/>
        <dbReference type="ChEBI" id="CHEBI:58462"/>
        <dbReference type="EC" id="3.5.4.16"/>
    </reaction>
</comment>
<comment type="pathway">
    <text evidence="2">Cofactor biosynthesis; 7,8-dihydroneopterin triphosphate biosynthesis; 7,8-dihydroneopterin triphosphate from GTP: step 1/1.</text>
</comment>
<comment type="subunit">
    <text evidence="1">Toroid-shaped homodecamer, composed of two pentamers of five dimers.</text>
</comment>
<comment type="similarity">
    <text evidence="2">Belongs to the GTP cyclohydrolase I family.</text>
</comment>
<accession>A0AK45</accession>
<evidence type="ECO:0000250" key="1"/>
<evidence type="ECO:0000255" key="2">
    <source>
        <dbReference type="HAMAP-Rule" id="MF_00223"/>
    </source>
</evidence>
<proteinExistence type="inferred from homology"/>
<reference key="1">
    <citation type="journal article" date="2006" name="J. Bacteriol.">
        <title>Whole-genome sequence of Listeria welshimeri reveals common steps in genome reduction with Listeria innocua as compared to Listeria monocytogenes.</title>
        <authorList>
            <person name="Hain T."/>
            <person name="Steinweg C."/>
            <person name="Kuenne C.T."/>
            <person name="Billion A."/>
            <person name="Ghai R."/>
            <person name="Chatterjee S.S."/>
            <person name="Domann E."/>
            <person name="Kaerst U."/>
            <person name="Goesmann A."/>
            <person name="Bekel T."/>
            <person name="Bartels D."/>
            <person name="Kaiser O."/>
            <person name="Meyer F."/>
            <person name="Puehler A."/>
            <person name="Weisshaar B."/>
            <person name="Wehland J."/>
            <person name="Liang C."/>
            <person name="Dandekar T."/>
            <person name="Lampidis R."/>
            <person name="Kreft J."/>
            <person name="Goebel W."/>
            <person name="Chakraborty T."/>
        </authorList>
    </citation>
    <scope>NUCLEOTIDE SEQUENCE [LARGE SCALE GENOMIC DNA]</scope>
    <source>
        <strain>ATCC 35897 / DSM 20650 / CCUG 15529 / CIP 8149 / NCTC 11857 / SLCC 5334 / V8</strain>
    </source>
</reference>
<name>GCH1_LISW6</name>
<feature type="chain" id="PRO_1000043705" description="GTP cyclohydrolase 1">
    <location>
        <begin position="1"/>
        <end position="189"/>
    </location>
</feature>
<feature type="binding site" evidence="2">
    <location>
        <position position="78"/>
    </location>
    <ligand>
        <name>Zn(2+)</name>
        <dbReference type="ChEBI" id="CHEBI:29105"/>
    </ligand>
</feature>
<feature type="binding site" evidence="2">
    <location>
        <position position="81"/>
    </location>
    <ligand>
        <name>Zn(2+)</name>
        <dbReference type="ChEBI" id="CHEBI:29105"/>
    </ligand>
</feature>
<feature type="binding site" evidence="2">
    <location>
        <position position="150"/>
    </location>
    <ligand>
        <name>Zn(2+)</name>
        <dbReference type="ChEBI" id="CHEBI:29105"/>
    </ligand>
</feature>
<gene>
    <name evidence="2" type="primary">folE</name>
    <name type="ordered locus">lwe1959</name>
</gene>
<keyword id="KW-0342">GTP-binding</keyword>
<keyword id="KW-0378">Hydrolase</keyword>
<keyword id="KW-0479">Metal-binding</keyword>
<keyword id="KW-0547">Nucleotide-binding</keyword>
<keyword id="KW-0554">One-carbon metabolism</keyword>
<keyword id="KW-0862">Zinc</keyword>